<sequence>MAPTFYHYHPLPMDQKEPGCGIRWRCLAAASVLILVALVIPLIIFAVKANSEACRDGLRAQEECSNTTRLLQRQLTRSQDNLAQAEAQASTCNRTVVTLQDSLEKKVSQIQEKQALIQEQEAQIKEQEAQIKEQEAQIKEQKAHIQEQQVRIQKLEGEVEEFEQKLKKLRTAEEASITSKQNSAGSMAVSSLLVLAVPLFLLF</sequence>
<accession>Q6WRU0</accession>
<name>BST2_CRIGR</name>
<evidence type="ECO:0000250" key="1"/>
<evidence type="ECO:0000250" key="2">
    <source>
        <dbReference type="UniProtKB" id="Q10589"/>
    </source>
</evidence>
<evidence type="ECO:0000250" key="3">
    <source>
        <dbReference type="UniProtKB" id="Q811A2"/>
    </source>
</evidence>
<evidence type="ECO:0000255" key="4"/>
<evidence type="ECO:0000269" key="5">
    <source>
    </source>
</evidence>
<protein>
    <recommendedName>
        <fullName>Bone marrow stromal antigen 2</fullName>
        <shortName>BST-2</shortName>
    </recommendedName>
    <alternativeName>
        <fullName>Luminal membrane-associated protein GREG</fullName>
    </alternativeName>
    <cdAntigenName>CD317</cdAntigenName>
</protein>
<proteinExistence type="evidence at protein level"/>
<dbReference type="EMBL" id="AY272060">
    <property type="protein sequence ID" value="AAQ16301.1"/>
    <property type="molecule type" value="mRNA"/>
</dbReference>
<dbReference type="EMBL" id="JH000137">
    <property type="status" value="NOT_ANNOTATED_CDS"/>
    <property type="molecule type" value="Genomic_DNA"/>
</dbReference>
<dbReference type="RefSeq" id="NP_001231044.1">
    <property type="nucleotide sequence ID" value="NM_001244115.1"/>
</dbReference>
<dbReference type="SMR" id="Q6WRU0"/>
<dbReference type="GlyCosmos" id="Q6WRU0">
    <property type="glycosylation" value="2 sites, No reported glycans"/>
</dbReference>
<dbReference type="PaxDb" id="10029-NP_001231044.1"/>
<dbReference type="Ensembl" id="ENSCGRT00001016649.1">
    <property type="protein sequence ID" value="ENSCGRP00001012415.1"/>
    <property type="gene ID" value="ENSCGRG00001013835.1"/>
</dbReference>
<dbReference type="GeneID" id="100689092"/>
<dbReference type="KEGG" id="cge:100689092"/>
<dbReference type="CTD" id="684"/>
<dbReference type="eggNOG" id="ENOG502TB0V">
    <property type="taxonomic scope" value="Eukaryota"/>
</dbReference>
<dbReference type="GeneTree" id="ENSGT00390000013782"/>
<dbReference type="OMA" id="WRPAVEC"/>
<dbReference type="OrthoDB" id="9635065at2759"/>
<dbReference type="Proteomes" id="UP000001075">
    <property type="component" value="Unassembled WGS sequence"/>
</dbReference>
<dbReference type="Proteomes" id="UP000694386">
    <property type="component" value="Unplaced"/>
</dbReference>
<dbReference type="Proteomes" id="UP001108280">
    <property type="component" value="Chromosome 1"/>
</dbReference>
<dbReference type="GO" id="GO:0016324">
    <property type="term" value="C:apical plasma membrane"/>
    <property type="evidence" value="ECO:0000250"/>
    <property type="project" value="UniProtKB"/>
</dbReference>
<dbReference type="GO" id="GO:0009986">
    <property type="term" value="C:cell surface"/>
    <property type="evidence" value="ECO:0000250"/>
    <property type="project" value="UniProtKB"/>
</dbReference>
<dbReference type="GO" id="GO:0005794">
    <property type="term" value="C:Golgi apparatus"/>
    <property type="evidence" value="ECO:0007669"/>
    <property type="project" value="UniProtKB-SubCell"/>
</dbReference>
<dbReference type="GO" id="GO:0005770">
    <property type="term" value="C:late endosome"/>
    <property type="evidence" value="ECO:0007669"/>
    <property type="project" value="UniProtKB-SubCell"/>
</dbReference>
<dbReference type="GO" id="GO:0045121">
    <property type="term" value="C:membrane raft"/>
    <property type="evidence" value="ECO:0007669"/>
    <property type="project" value="UniProtKB-SubCell"/>
</dbReference>
<dbReference type="GO" id="GO:0005886">
    <property type="term" value="C:plasma membrane"/>
    <property type="evidence" value="ECO:0000250"/>
    <property type="project" value="UniProtKB"/>
</dbReference>
<dbReference type="GO" id="GO:0098552">
    <property type="term" value="C:side of membrane"/>
    <property type="evidence" value="ECO:0007669"/>
    <property type="project" value="UniProtKB-KW"/>
</dbReference>
<dbReference type="GO" id="GO:0008191">
    <property type="term" value="F:metalloendopeptidase inhibitor activity"/>
    <property type="evidence" value="ECO:0000250"/>
    <property type="project" value="UniProtKB"/>
</dbReference>
<dbReference type="GO" id="GO:0051607">
    <property type="term" value="P:defense response to virus"/>
    <property type="evidence" value="ECO:0007669"/>
    <property type="project" value="InterPro"/>
</dbReference>
<dbReference type="GO" id="GO:0045087">
    <property type="term" value="P:innate immune response"/>
    <property type="evidence" value="ECO:0000250"/>
    <property type="project" value="UniProtKB"/>
</dbReference>
<dbReference type="GO" id="GO:0030308">
    <property type="term" value="P:negative regulation of cell growth"/>
    <property type="evidence" value="ECO:0000250"/>
    <property type="project" value="UniProtKB"/>
</dbReference>
<dbReference type="GO" id="GO:0030336">
    <property type="term" value="P:negative regulation of cell migration"/>
    <property type="evidence" value="ECO:0000250"/>
    <property type="project" value="UniProtKB"/>
</dbReference>
<dbReference type="GO" id="GO:1901253">
    <property type="term" value="P:negative regulation of intracellular transport of viral material"/>
    <property type="evidence" value="ECO:0000250"/>
    <property type="project" value="UniProtKB"/>
</dbReference>
<dbReference type="GO" id="GO:0002737">
    <property type="term" value="P:negative regulation of plasmacytoid dendritic cell cytokine production"/>
    <property type="evidence" value="ECO:0000250"/>
    <property type="project" value="UniProtKB"/>
</dbReference>
<dbReference type="GO" id="GO:0045071">
    <property type="term" value="P:negative regulation of viral genome replication"/>
    <property type="evidence" value="ECO:0000250"/>
    <property type="project" value="UniProtKB"/>
</dbReference>
<dbReference type="GO" id="GO:0032956">
    <property type="term" value="P:regulation of actin cytoskeleton organization"/>
    <property type="evidence" value="ECO:0000250"/>
    <property type="project" value="UniProtKB"/>
</dbReference>
<dbReference type="GO" id="GO:0035455">
    <property type="term" value="P:response to interferon-alpha"/>
    <property type="evidence" value="ECO:0000250"/>
    <property type="project" value="UniProtKB"/>
</dbReference>
<dbReference type="GO" id="GO:0035456">
    <property type="term" value="P:response to interferon-beta"/>
    <property type="evidence" value="ECO:0000250"/>
    <property type="project" value="UniProtKB"/>
</dbReference>
<dbReference type="GO" id="GO:0034341">
    <property type="term" value="P:response to type II interferon"/>
    <property type="evidence" value="ECO:0000250"/>
    <property type="project" value="UniProtKB"/>
</dbReference>
<dbReference type="GO" id="GO:0009615">
    <property type="term" value="P:response to virus"/>
    <property type="evidence" value="ECO:0000250"/>
    <property type="project" value="UniProtKB"/>
</dbReference>
<dbReference type="FunFam" id="1.20.5.1700:FF:000006">
    <property type="entry name" value="Bone marrow stromal antigen 2"/>
    <property type="match status" value="1"/>
</dbReference>
<dbReference type="Gene3D" id="1.20.5.1700">
    <property type="match status" value="1"/>
</dbReference>
<dbReference type="InterPro" id="IPR024886">
    <property type="entry name" value="BST2"/>
</dbReference>
<dbReference type="PANTHER" id="PTHR15190">
    <property type="entry name" value="BONE MARROW STROMAL ANTIGEN 2"/>
    <property type="match status" value="1"/>
</dbReference>
<dbReference type="PANTHER" id="PTHR15190:SF1">
    <property type="entry name" value="BONE MARROW STROMAL ANTIGEN 2"/>
    <property type="match status" value="1"/>
</dbReference>
<dbReference type="Pfam" id="PF16716">
    <property type="entry name" value="BST2"/>
    <property type="match status" value="1"/>
</dbReference>
<organism>
    <name type="scientific">Cricetulus griseus</name>
    <name type="common">Chinese hamster</name>
    <name type="synonym">Cricetulus barabensis griseus</name>
    <dbReference type="NCBI Taxonomy" id="10029"/>
    <lineage>
        <taxon>Eukaryota</taxon>
        <taxon>Metazoa</taxon>
        <taxon>Chordata</taxon>
        <taxon>Craniata</taxon>
        <taxon>Vertebrata</taxon>
        <taxon>Euteleostomi</taxon>
        <taxon>Mammalia</taxon>
        <taxon>Eutheria</taxon>
        <taxon>Euarchontoglires</taxon>
        <taxon>Glires</taxon>
        <taxon>Rodentia</taxon>
        <taxon>Myomorpha</taxon>
        <taxon>Muroidea</taxon>
        <taxon>Cricetidae</taxon>
        <taxon>Cricetinae</taxon>
        <taxon>Cricetulus</taxon>
    </lineage>
</organism>
<gene>
    <name type="primary">Bst2</name>
</gene>
<reference key="1">
    <citation type="journal article" date="2007" name="Mol. Biol. Cell">
        <title>Involvement of a Golgi-resident GPI-anchored protein in maintenance of the Golgi structure.</title>
        <authorList>
            <person name="Li X."/>
            <person name="Kaloyanova D."/>
            <person name="van Eijk M."/>
            <person name="Eerland R."/>
            <person name="van der Goot G."/>
            <person name="Oorschot V."/>
            <person name="Klumperman J."/>
            <person name="Lottspeich F."/>
            <person name="Starkuviene V."/>
            <person name="Wieland F.T."/>
            <person name="Helms J.B."/>
        </authorList>
    </citation>
    <scope>NUCLEOTIDE SEQUENCE [MRNA]</scope>
    <scope>SUBCELLULAR LOCATION</scope>
    <scope>SUBUNIT</scope>
    <scope>GPI-ANCHOR AT SER-183</scope>
</reference>
<reference key="2">
    <citation type="journal article" date="2011" name="Nat. Biotechnol.">
        <title>The genomic sequence of the Chinese hamster ovary (CHO)-K1 cell line.</title>
        <authorList>
            <person name="Xu X."/>
            <person name="Nagarajan H."/>
            <person name="Lewis N.E."/>
            <person name="Pan S."/>
            <person name="Cai Z."/>
            <person name="Liu X."/>
            <person name="Chen W."/>
            <person name="Xie M."/>
            <person name="Wang W."/>
            <person name="Hammond S."/>
            <person name="Andersen M.R."/>
            <person name="Neff N."/>
            <person name="Passarelli B."/>
            <person name="Koh W."/>
            <person name="Fan H.C."/>
            <person name="Wang J."/>
            <person name="Gui Y."/>
            <person name="Lee K.H."/>
            <person name="Betenbaugh M.J."/>
            <person name="Quake S.R."/>
            <person name="Famili I."/>
            <person name="Palsson B.O."/>
            <person name="Wang J."/>
        </authorList>
    </citation>
    <scope>NUCLEOTIDE SEQUENCE [LARGE SCALE GENOMIC DNA]</scope>
</reference>
<feature type="chain" id="PRO_0000253550" description="Bone marrow stromal antigen 2">
    <location>
        <begin position="1"/>
        <end position="183"/>
    </location>
</feature>
<feature type="propeptide" id="PRO_0000253551" description="Removed in mature form" evidence="4">
    <location>
        <begin position="184"/>
        <end position="203"/>
    </location>
</feature>
<feature type="topological domain" description="Cytoplasmic" evidence="4">
    <location>
        <begin position="1"/>
        <end position="26"/>
    </location>
</feature>
<feature type="transmembrane region" description="Helical; Signal-anchor for type II membrane protein" evidence="4">
    <location>
        <begin position="27"/>
        <end position="47"/>
    </location>
</feature>
<feature type="topological domain" description="Extracellular" evidence="4">
    <location>
        <begin position="48"/>
        <end position="183"/>
    </location>
</feature>
<feature type="coiled-coil region" evidence="4">
    <location>
        <begin position="66"/>
        <end position="178"/>
    </location>
</feature>
<feature type="lipid moiety-binding region" description="GPI-anchor amidated serine" evidence="5">
    <location>
        <position position="183"/>
    </location>
</feature>
<feature type="glycosylation site" description="N-linked (GlcNAc...) asparagine" evidence="4">
    <location>
        <position position="66"/>
    </location>
</feature>
<feature type="glycosylation site" description="N-linked (GlcNAc...) asparagine" evidence="4">
    <location>
        <position position="93"/>
    </location>
</feature>
<feature type="disulfide bond" description="Interchain" evidence="1">
    <location>
        <position position="54"/>
    </location>
</feature>
<feature type="disulfide bond" description="Interchain" evidence="1">
    <location>
        <position position="64"/>
    </location>
</feature>
<feature type="disulfide bond" description="Interchain" evidence="1">
    <location>
        <position position="92"/>
    </location>
</feature>
<comment type="function">
    <text evidence="1">IFN-induced antiviral host restriction factor which efficiently blocks the release of diverse mammalian enveloped viruses by directly tethering nascent virions to the membranes of infected cells. Acts as a direct physical tether, holding virions to the cell membrane and linking virions to each other. The tethered virions can be internalized by endocytosis and subsequently degraded or they can remain on the cell surface. In either case, their spread as cell-free virions is restricted. Its target viruses belong to diverse families, including retroviridae: human immunodeficiency virus type 1 (HIV-1), mouse mammary tumor virus (MMTV) and murine leukemia virus (MLV), filoviridae: ebola virus (EBOV), arenaviridae: lassa virus (LASV), and rhabdoviridae: vesicular stomatitis virus (VSV). Can inhibit cell surface proteolytic activity of MMP14 causing decreased activation of MMP15 which results in inhibition of cell growth and migration. Can stimulate signaling by LILRA4/ILT7 and consequently provide negative feedback to the production of IFN by plasmacytoid dendritic cells in response to viral infection. Plays a role in the organization of the subapical actin cytoskeleton in polarized epithelial cells (By similarity).</text>
</comment>
<comment type="subunit">
    <text evidence="2 3 5">Parallel homodimer; disulfide-linked (PubMed:17251550). May form homotetramers under reducing conditions. Isoform 1 and isoform 2 form homodimers and also heterodimers with each other. Dimerization is essential for its antiviral activity (By similarity). Interacts (via cytoplasmic domain) with ARHGAP44 (By similarity). Interacts with MMP14 (via C-terminal cytoplasmic tail). Interacts with LILRA4/ILT7. Interacts with RNF115 (By similarity).</text>
</comment>
<comment type="subcellular location">
    <subcellularLocation>
        <location evidence="5">Golgi apparatus</location>
        <location evidence="5">trans-Golgi network</location>
    </subcellularLocation>
    <subcellularLocation>
        <location evidence="5">Cell membrane</location>
        <topology evidence="5">Single-pass type II membrane protein</topology>
    </subcellularLocation>
    <subcellularLocation>
        <location evidence="5">Cell membrane</location>
        <topology evidence="5">Lipid-anchor</topology>
        <topology evidence="5">GPI-anchor</topology>
    </subcellularLocation>
    <subcellularLocation>
        <location evidence="1">Late endosome</location>
    </subcellularLocation>
    <subcellularLocation>
        <location evidence="1">Membrane raft</location>
    </subcellularLocation>
    <subcellularLocation>
        <location evidence="1">Cytoplasm</location>
    </subcellularLocation>
    <subcellularLocation>
        <location evidence="1">Apical cell membrane</location>
    </subcellularLocation>
    <text evidence="1">Shuttles between the cell membrane, where it is present predominantly in membrane/lipid rafts, and the trans-Golgi network. Forms a complex with MMP14 and localizes to the cytoplasm (By similarity).</text>
</comment>
<comment type="domain">
    <text evidence="1">The extracellular coiled coil domain forms an extended 170 A long semi-flexible rod-like structure important for virion retention at the cell surface and prevention of virus spreading.</text>
</comment>
<comment type="PTM">
    <text evidence="1">The GPI anchor is essential for its antiviral activity.</text>
</comment>
<keyword id="KW-1003">Cell membrane</keyword>
<keyword id="KW-0175">Coiled coil</keyword>
<keyword id="KW-0963">Cytoplasm</keyword>
<keyword id="KW-1015">Disulfide bond</keyword>
<keyword id="KW-0967">Endosome</keyword>
<keyword id="KW-0325">Glycoprotein</keyword>
<keyword id="KW-0333">Golgi apparatus</keyword>
<keyword id="KW-0336">GPI-anchor</keyword>
<keyword id="KW-0391">Immunity</keyword>
<keyword id="KW-0399">Innate immunity</keyword>
<keyword id="KW-0449">Lipoprotein</keyword>
<keyword id="KW-0472">Membrane</keyword>
<keyword id="KW-1185">Reference proteome</keyword>
<keyword id="KW-0735">Signal-anchor</keyword>
<keyword id="KW-0812">Transmembrane</keyword>
<keyword id="KW-1133">Transmembrane helix</keyword>